<gene>
    <name evidence="1" type="primary">rpl10e</name>
    <name type="ordered locus">Hbut_1653</name>
</gene>
<sequence>MPQKPARCYTKRRSKAFSGPPYTRKEYIHGVPPPKIQKFVMGNPHGDYDYIVEVYVTERGQIRHNALEAARVAVHKYLSTTIGDQNYFFRVRVYPHHVLRENKMMAFAGADRLQEGMRQAFGKPVGTAARVYPGQAVLEVRVKKEHLDHAKEALRRGASKLPLPSRIRVIPLKEEAKAAA</sequence>
<organism>
    <name type="scientific">Hyperthermus butylicus (strain DSM 5456 / JCM 9403 / PLM1-5)</name>
    <dbReference type="NCBI Taxonomy" id="415426"/>
    <lineage>
        <taxon>Archaea</taxon>
        <taxon>Thermoproteota</taxon>
        <taxon>Thermoprotei</taxon>
        <taxon>Desulfurococcales</taxon>
        <taxon>Pyrodictiaceae</taxon>
        <taxon>Hyperthermus</taxon>
    </lineage>
</organism>
<dbReference type="EMBL" id="CP000493">
    <property type="protein sequence ID" value="ABM81467.1"/>
    <property type="molecule type" value="Genomic_DNA"/>
</dbReference>
<dbReference type="RefSeq" id="WP_011822785.1">
    <property type="nucleotide sequence ID" value="NC_008818.1"/>
</dbReference>
<dbReference type="SMR" id="A2BNA6"/>
<dbReference type="STRING" id="415426.Hbut_1653"/>
<dbReference type="EnsemblBacteria" id="ABM81467">
    <property type="protein sequence ID" value="ABM81467"/>
    <property type="gene ID" value="Hbut_1653"/>
</dbReference>
<dbReference type="GeneID" id="4781578"/>
<dbReference type="KEGG" id="hbu:Hbut_1653"/>
<dbReference type="eggNOG" id="arCOG04113">
    <property type="taxonomic scope" value="Archaea"/>
</dbReference>
<dbReference type="HOGENOM" id="CLU_084051_0_2_2"/>
<dbReference type="OrthoDB" id="30538at2157"/>
<dbReference type="Proteomes" id="UP000002593">
    <property type="component" value="Chromosome"/>
</dbReference>
<dbReference type="GO" id="GO:1990904">
    <property type="term" value="C:ribonucleoprotein complex"/>
    <property type="evidence" value="ECO:0007669"/>
    <property type="project" value="UniProtKB-KW"/>
</dbReference>
<dbReference type="GO" id="GO:0005840">
    <property type="term" value="C:ribosome"/>
    <property type="evidence" value="ECO:0007669"/>
    <property type="project" value="UniProtKB-KW"/>
</dbReference>
<dbReference type="GO" id="GO:0003735">
    <property type="term" value="F:structural constituent of ribosome"/>
    <property type="evidence" value="ECO:0007669"/>
    <property type="project" value="InterPro"/>
</dbReference>
<dbReference type="GO" id="GO:0006412">
    <property type="term" value="P:translation"/>
    <property type="evidence" value="ECO:0007669"/>
    <property type="project" value="UniProtKB-UniRule"/>
</dbReference>
<dbReference type="CDD" id="cd01433">
    <property type="entry name" value="Ribosomal_L16_L10e"/>
    <property type="match status" value="1"/>
</dbReference>
<dbReference type="Gene3D" id="3.90.1170.10">
    <property type="entry name" value="Ribosomal protein L10e/L16"/>
    <property type="match status" value="1"/>
</dbReference>
<dbReference type="HAMAP" id="MF_00448">
    <property type="entry name" value="Ribosomal_uL16_arch"/>
    <property type="match status" value="1"/>
</dbReference>
<dbReference type="InterPro" id="IPR047873">
    <property type="entry name" value="Ribosomal_uL16"/>
</dbReference>
<dbReference type="InterPro" id="IPR022981">
    <property type="entry name" value="Ribosomal_uL16_arc"/>
</dbReference>
<dbReference type="InterPro" id="IPR018255">
    <property type="entry name" value="Ribosomal_uL16_CS_euk_arc"/>
</dbReference>
<dbReference type="InterPro" id="IPR016180">
    <property type="entry name" value="Ribosomal_uL16_dom"/>
</dbReference>
<dbReference type="InterPro" id="IPR001197">
    <property type="entry name" value="Ribosomal_uL16_euk_arch"/>
</dbReference>
<dbReference type="InterPro" id="IPR036920">
    <property type="entry name" value="Ribosomal_uL16_sf"/>
</dbReference>
<dbReference type="NCBIfam" id="NF003236">
    <property type="entry name" value="PRK04199.1-1"/>
    <property type="match status" value="1"/>
</dbReference>
<dbReference type="NCBIfam" id="NF003239">
    <property type="entry name" value="PRK04199.1-4"/>
    <property type="match status" value="1"/>
</dbReference>
<dbReference type="PANTHER" id="PTHR11726">
    <property type="entry name" value="60S RIBOSOMAL PROTEIN L10"/>
    <property type="match status" value="1"/>
</dbReference>
<dbReference type="Pfam" id="PF00252">
    <property type="entry name" value="Ribosomal_L16"/>
    <property type="match status" value="1"/>
</dbReference>
<dbReference type="PIRSF" id="PIRSF005590">
    <property type="entry name" value="Ribosomal_L10"/>
    <property type="match status" value="1"/>
</dbReference>
<dbReference type="SUPFAM" id="SSF54686">
    <property type="entry name" value="Ribosomal protein L16p/L10e"/>
    <property type="match status" value="1"/>
</dbReference>
<dbReference type="PROSITE" id="PS01257">
    <property type="entry name" value="RIBOSOMAL_L10E"/>
    <property type="match status" value="1"/>
</dbReference>
<proteinExistence type="inferred from homology"/>
<accession>A2BNA6</accession>
<feature type="chain" id="PRO_1000026183" description="Large ribosomal subunit protein uL16">
    <location>
        <begin position="1"/>
        <end position="180"/>
    </location>
</feature>
<reference key="1">
    <citation type="journal article" date="2007" name="Archaea">
        <title>The genome of Hyperthermus butylicus: a sulfur-reducing, peptide fermenting, neutrophilic Crenarchaeote growing up to 108 degrees C.</title>
        <authorList>
            <person name="Bruegger K."/>
            <person name="Chen L."/>
            <person name="Stark M."/>
            <person name="Zibat A."/>
            <person name="Redder P."/>
            <person name="Ruepp A."/>
            <person name="Awayez M."/>
            <person name="She Q."/>
            <person name="Garrett R.A."/>
            <person name="Klenk H.-P."/>
        </authorList>
    </citation>
    <scope>NUCLEOTIDE SEQUENCE [LARGE SCALE GENOMIC DNA]</scope>
    <source>
        <strain>DSM 5456 / JCM 9403 / PLM1-5</strain>
    </source>
</reference>
<evidence type="ECO:0000255" key="1">
    <source>
        <dbReference type="HAMAP-Rule" id="MF_00448"/>
    </source>
</evidence>
<evidence type="ECO:0000305" key="2"/>
<keyword id="KW-1185">Reference proteome</keyword>
<keyword id="KW-0687">Ribonucleoprotein</keyword>
<keyword id="KW-0689">Ribosomal protein</keyword>
<protein>
    <recommendedName>
        <fullName evidence="1">Large ribosomal subunit protein uL16</fullName>
    </recommendedName>
    <alternativeName>
        <fullName evidence="2">50S ribosomal protein L10e</fullName>
    </alternativeName>
</protein>
<name>RL10E_HYPBU</name>
<comment type="similarity">
    <text evidence="1">Belongs to the universal ribosomal protein uL16 family.</text>
</comment>